<organism>
    <name type="scientific">Mus musculus</name>
    <name type="common">Mouse</name>
    <dbReference type="NCBI Taxonomy" id="10090"/>
    <lineage>
        <taxon>Eukaryota</taxon>
        <taxon>Metazoa</taxon>
        <taxon>Chordata</taxon>
        <taxon>Craniata</taxon>
        <taxon>Vertebrata</taxon>
        <taxon>Euteleostomi</taxon>
        <taxon>Mammalia</taxon>
        <taxon>Eutheria</taxon>
        <taxon>Euarchontoglires</taxon>
        <taxon>Glires</taxon>
        <taxon>Rodentia</taxon>
        <taxon>Myomorpha</taxon>
        <taxon>Muroidea</taxon>
        <taxon>Muridae</taxon>
        <taxon>Murinae</taxon>
        <taxon>Mus</taxon>
        <taxon>Mus</taxon>
    </lineage>
</organism>
<sequence>MAAVILESIFLKRSQQKKKTSPLNFKKRLFLLTVHKLSYYEYDFERGRRGSKKGSIDVEKITCVETVIPEKNPPPERQIPRRGEESSEMEQISIIERFPYPFQVVYDEGPLYVFSPTEELRKRWIHQLKNVIRYNSDLVQKYHPCFWIDGQYLCCSQTAKNAMGCQILENRNGSLKPGSSHRKTKKPLPPTPEEDQILKKPLPPEPTAAPISTTELKKVVALYDYMPMNANDLQLRKGEEYFILEESNLPWWRARDKNGQEGYIPSNYITEAEDSIEMYEWYSKHMTRSQAEQLLKQEGKEGGFIVRDSSKAGKYTVSVFAKSTGEPQGVIRHYVVCSTPQSQYYLAEKHLFSTIPELINYHQHNSAGLISRLKYPVSKQNKNAPSTAGLGYGSWEIDPKDLTFLKELGTGQFGVVKYGKWRGQYDVAIKMIREGSMSEDEFIEEAKVMMNLSHEKLVQLYGVCTKQRPIFIITEYMANGCLLNYLREMRHRFQTQQLLEMCKDVCEAMEYLESKQFLHRDLAARNCLVNDQGVVKVSDFGLSRYVLDDEYTSSVGSKFPVRWSPPEVLMYSKFSSKSDIWAFGVLMWEIYSLGKMPYERFTNSETAEHIAQGLRLYRPHLASERVYTIMYSCWHEKADERPSFKILLSNILDVMDEES</sequence>
<accession>P35991</accession>
<accession>Q61365</accession>
<dbReference type="EC" id="2.7.10.2"/>
<dbReference type="EMBL" id="L08967">
    <property type="protein sequence ID" value="AAA37316.1"/>
    <property type="molecule type" value="mRNA"/>
</dbReference>
<dbReference type="EMBL" id="L10627">
    <property type="status" value="NOT_ANNOTATED_CDS"/>
    <property type="molecule type" value="mRNA"/>
</dbReference>
<dbReference type="EMBL" id="L29788">
    <property type="protein sequence ID" value="AAA66943.1"/>
    <property type="molecule type" value="mRNA"/>
</dbReference>
<dbReference type="EMBL" id="U58105">
    <property type="protein sequence ID" value="AAB47246.1"/>
    <property type="molecule type" value="Genomic_DNA"/>
</dbReference>
<dbReference type="CCDS" id="CCDS30396.1"/>
<dbReference type="PIR" id="I49553">
    <property type="entry name" value="I49553"/>
</dbReference>
<dbReference type="RefSeq" id="NP_038510.2">
    <property type="nucleotide sequence ID" value="NM_013482.2"/>
</dbReference>
<dbReference type="RefSeq" id="XP_006528546.1">
    <property type="nucleotide sequence ID" value="XM_006528483.5"/>
</dbReference>
<dbReference type="RefSeq" id="XP_006528547.1">
    <property type="nucleotide sequence ID" value="XM_006528484.5"/>
</dbReference>
<dbReference type="RefSeq" id="XP_006528548.1">
    <property type="nucleotide sequence ID" value="XM_006528485.5"/>
</dbReference>
<dbReference type="PDB" id="4XI2">
    <property type="method" value="X-ray"/>
    <property type="resolution" value="2.60 A"/>
    <property type="chains" value="A=214-659"/>
</dbReference>
<dbReference type="PDB" id="6MNY">
    <property type="method" value="X-ray"/>
    <property type="resolution" value="2.80 A"/>
    <property type="chains" value="A/B=384-659"/>
</dbReference>
<dbReference type="PDB" id="8FD9">
    <property type="method" value="X-ray"/>
    <property type="resolution" value="1.70 A"/>
    <property type="chains" value="A=396-659"/>
</dbReference>
<dbReference type="PDB" id="8FF0">
    <property type="method" value="X-ray"/>
    <property type="resolution" value="2.60 A"/>
    <property type="chains" value="A=396-659"/>
</dbReference>
<dbReference type="PDB" id="8GMB">
    <property type="method" value="X-ray"/>
    <property type="resolution" value="3.40 A"/>
    <property type="chains" value="A=1-659"/>
</dbReference>
<dbReference type="PDB" id="8S93">
    <property type="method" value="X-ray"/>
    <property type="resolution" value="2.10 A"/>
    <property type="chains" value="A=1-171, A=396-659"/>
</dbReference>
<dbReference type="PDB" id="8S9F">
    <property type="method" value="X-ray"/>
    <property type="resolution" value="2.60 A"/>
    <property type="chains" value="A/B=382-659"/>
</dbReference>
<dbReference type="PDBsum" id="4XI2"/>
<dbReference type="PDBsum" id="6MNY"/>
<dbReference type="PDBsum" id="8FD9"/>
<dbReference type="PDBsum" id="8FF0"/>
<dbReference type="PDBsum" id="8GMB"/>
<dbReference type="PDBsum" id="8S93"/>
<dbReference type="PDBsum" id="8S9F"/>
<dbReference type="BMRB" id="P35991"/>
<dbReference type="EMDB" id="EMD-40585"/>
<dbReference type="EMDB" id="EMD-40586"/>
<dbReference type="EMDB" id="EMD-40587"/>
<dbReference type="SASBDB" id="P35991"/>
<dbReference type="SMR" id="P35991"/>
<dbReference type="BioGRID" id="198400">
    <property type="interactions" value="26"/>
</dbReference>
<dbReference type="CORUM" id="P35991"/>
<dbReference type="ELM" id="P35991"/>
<dbReference type="FunCoup" id="P35991">
    <property type="interactions" value="857"/>
</dbReference>
<dbReference type="IntAct" id="P35991">
    <property type="interactions" value="29"/>
</dbReference>
<dbReference type="STRING" id="10090.ENSMUSP00000033617"/>
<dbReference type="BindingDB" id="P35991"/>
<dbReference type="ChEMBL" id="CHEMBL3259478"/>
<dbReference type="GlyGen" id="P35991">
    <property type="glycosylation" value="3 sites, 1 O-linked glycan (1 site)"/>
</dbReference>
<dbReference type="iPTMnet" id="P35991"/>
<dbReference type="PhosphoSitePlus" id="P35991"/>
<dbReference type="PaxDb" id="10090-ENSMUSP00000033617"/>
<dbReference type="PeptideAtlas" id="P35991"/>
<dbReference type="ProteomicsDB" id="265388"/>
<dbReference type="Antibodypedia" id="699">
    <property type="antibodies" value="1343 antibodies from 50 providers"/>
</dbReference>
<dbReference type="DNASU" id="12229"/>
<dbReference type="Ensembl" id="ENSMUST00000033617.13">
    <property type="protein sequence ID" value="ENSMUSP00000033617.7"/>
    <property type="gene ID" value="ENSMUSG00000031264.14"/>
</dbReference>
<dbReference type="GeneID" id="12229"/>
<dbReference type="KEGG" id="mmu:12229"/>
<dbReference type="UCSC" id="uc009uge.2">
    <property type="organism name" value="mouse"/>
</dbReference>
<dbReference type="AGR" id="MGI:88216"/>
<dbReference type="CTD" id="695"/>
<dbReference type="MGI" id="MGI:88216">
    <property type="gene designation" value="Btk"/>
</dbReference>
<dbReference type="VEuPathDB" id="HostDB:ENSMUSG00000031264"/>
<dbReference type="eggNOG" id="KOG0197">
    <property type="taxonomic scope" value="Eukaryota"/>
</dbReference>
<dbReference type="GeneTree" id="ENSGT00940000158469"/>
<dbReference type="HOGENOM" id="CLU_000288_7_2_1"/>
<dbReference type="InParanoid" id="P35991"/>
<dbReference type="OMA" id="CEAMDYL"/>
<dbReference type="OrthoDB" id="4062651at2759"/>
<dbReference type="PhylomeDB" id="P35991"/>
<dbReference type="TreeFam" id="TF351634"/>
<dbReference type="BRENDA" id="2.7.10.2">
    <property type="organism ID" value="3474"/>
</dbReference>
<dbReference type="Reactome" id="R-MMU-2029482">
    <property type="pathway name" value="Regulation of actin dynamics for phagocytic cup formation"/>
</dbReference>
<dbReference type="Reactome" id="R-MMU-2424491">
    <property type="pathway name" value="DAP12 signaling"/>
</dbReference>
<dbReference type="Reactome" id="R-MMU-2871809">
    <property type="pathway name" value="FCERI mediated Ca+2 mobilization"/>
</dbReference>
<dbReference type="Reactome" id="R-MMU-416476">
    <property type="pathway name" value="G alpha (q) signalling events"/>
</dbReference>
<dbReference type="Reactome" id="R-MMU-416482">
    <property type="pathway name" value="G alpha (12/13) signalling events"/>
</dbReference>
<dbReference type="Reactome" id="R-MMU-5663213">
    <property type="pathway name" value="RHO GTPases Activate WASPs and WAVEs"/>
</dbReference>
<dbReference type="Reactome" id="R-MMU-8964315">
    <property type="pathway name" value="G beta:gamma signalling through BTK"/>
</dbReference>
<dbReference type="Reactome" id="R-MMU-983695">
    <property type="pathway name" value="Antigen activates B Cell Receptor (BCR) leading to generation of second messengers"/>
</dbReference>
<dbReference type="BioGRID-ORCS" id="12229">
    <property type="hits" value="2 hits in 79 CRISPR screens"/>
</dbReference>
<dbReference type="ChiTaRS" id="Btk">
    <property type="organism name" value="mouse"/>
</dbReference>
<dbReference type="EvolutionaryTrace" id="P35991"/>
<dbReference type="PRO" id="PR:P35991"/>
<dbReference type="Proteomes" id="UP000000589">
    <property type="component" value="Chromosome X"/>
</dbReference>
<dbReference type="RNAct" id="P35991">
    <property type="molecule type" value="protein"/>
</dbReference>
<dbReference type="Bgee" id="ENSMUSG00000031264">
    <property type="expression patterns" value="Expressed in granulocyte and 74 other cell types or tissues"/>
</dbReference>
<dbReference type="ExpressionAtlas" id="P35991">
    <property type="expression patterns" value="baseline and differential"/>
</dbReference>
<dbReference type="GO" id="GO:0005737">
    <property type="term" value="C:cytoplasm"/>
    <property type="evidence" value="ECO:0000314"/>
    <property type="project" value="MGI"/>
</dbReference>
<dbReference type="GO" id="GO:0031410">
    <property type="term" value="C:cytoplasmic vesicle"/>
    <property type="evidence" value="ECO:0000314"/>
    <property type="project" value="MGI"/>
</dbReference>
<dbReference type="GO" id="GO:0005829">
    <property type="term" value="C:cytosol"/>
    <property type="evidence" value="ECO:0000304"/>
    <property type="project" value="Reactome"/>
</dbReference>
<dbReference type="GO" id="GO:0045121">
    <property type="term" value="C:membrane raft"/>
    <property type="evidence" value="ECO:0000314"/>
    <property type="project" value="UniProtKB"/>
</dbReference>
<dbReference type="GO" id="GO:0005634">
    <property type="term" value="C:nucleus"/>
    <property type="evidence" value="ECO:0000314"/>
    <property type="project" value="MGI"/>
</dbReference>
<dbReference type="GO" id="GO:0048471">
    <property type="term" value="C:perinuclear region of cytoplasm"/>
    <property type="evidence" value="ECO:0007669"/>
    <property type="project" value="Ensembl"/>
</dbReference>
<dbReference type="GO" id="GO:0005886">
    <property type="term" value="C:plasma membrane"/>
    <property type="evidence" value="ECO:0007669"/>
    <property type="project" value="UniProtKB-SubCell"/>
</dbReference>
<dbReference type="GO" id="GO:0005524">
    <property type="term" value="F:ATP binding"/>
    <property type="evidence" value="ECO:0007669"/>
    <property type="project" value="UniProtKB-KW"/>
</dbReference>
<dbReference type="GO" id="GO:0042802">
    <property type="term" value="F:identical protein binding"/>
    <property type="evidence" value="ECO:0007669"/>
    <property type="project" value="Ensembl"/>
</dbReference>
<dbReference type="GO" id="GO:0004715">
    <property type="term" value="F:non-membrane spanning protein tyrosine kinase activity"/>
    <property type="evidence" value="ECO:0007669"/>
    <property type="project" value="UniProtKB-EC"/>
</dbReference>
<dbReference type="GO" id="GO:0005547">
    <property type="term" value="F:phosphatidylinositol-3,4,5-trisphosphate binding"/>
    <property type="evidence" value="ECO:0007669"/>
    <property type="project" value="Ensembl"/>
</dbReference>
<dbReference type="GO" id="GO:0016004">
    <property type="term" value="F:phospholipase activator activity"/>
    <property type="evidence" value="ECO:0007669"/>
    <property type="project" value="Ensembl"/>
</dbReference>
<dbReference type="GO" id="GO:0043274">
    <property type="term" value="F:phospholipase binding"/>
    <property type="evidence" value="ECO:0007669"/>
    <property type="project" value="Ensembl"/>
</dbReference>
<dbReference type="GO" id="GO:0004713">
    <property type="term" value="F:protein tyrosine kinase activity"/>
    <property type="evidence" value="ECO:0000314"/>
    <property type="project" value="UniProtKB"/>
</dbReference>
<dbReference type="GO" id="GO:0008270">
    <property type="term" value="F:zinc ion binding"/>
    <property type="evidence" value="ECO:0007669"/>
    <property type="project" value="UniProtKB-KW"/>
</dbReference>
<dbReference type="GO" id="GO:0006915">
    <property type="term" value="P:apoptotic process"/>
    <property type="evidence" value="ECO:0007669"/>
    <property type="project" value="UniProtKB-KW"/>
</dbReference>
<dbReference type="GO" id="GO:0002344">
    <property type="term" value="P:B cell affinity maturation"/>
    <property type="evidence" value="ECO:0000315"/>
    <property type="project" value="MGI"/>
</dbReference>
<dbReference type="GO" id="GO:0050853">
    <property type="term" value="P:B cell receptor signaling pathway"/>
    <property type="evidence" value="ECO:0007669"/>
    <property type="project" value="Ensembl"/>
</dbReference>
<dbReference type="GO" id="GO:0048469">
    <property type="term" value="P:cell maturation"/>
    <property type="evidence" value="ECO:0000315"/>
    <property type="project" value="MGI"/>
</dbReference>
<dbReference type="GO" id="GO:0098761">
    <property type="term" value="P:cellular response to interleukin-7"/>
    <property type="evidence" value="ECO:0000315"/>
    <property type="project" value="MGI"/>
</dbReference>
<dbReference type="GO" id="GO:0071226">
    <property type="term" value="P:cellular response to molecule of fungal origin"/>
    <property type="evidence" value="ECO:0007669"/>
    <property type="project" value="Ensembl"/>
</dbReference>
<dbReference type="GO" id="GO:0034614">
    <property type="term" value="P:cellular response to reactive oxygen species"/>
    <property type="evidence" value="ECO:0007669"/>
    <property type="project" value="Ensembl"/>
</dbReference>
<dbReference type="GO" id="GO:1990959">
    <property type="term" value="P:eosinophil homeostasis"/>
    <property type="evidence" value="ECO:0007669"/>
    <property type="project" value="Ensembl"/>
</dbReference>
<dbReference type="GO" id="GO:0002553">
    <property type="term" value="P:histamine secretion by mast cell"/>
    <property type="evidence" value="ECO:0007669"/>
    <property type="project" value="Ensembl"/>
</dbReference>
<dbReference type="GO" id="GO:0045087">
    <property type="term" value="P:innate immune response"/>
    <property type="evidence" value="ECO:0007669"/>
    <property type="project" value="UniProtKB-KW"/>
</dbReference>
<dbReference type="GO" id="GO:0035556">
    <property type="term" value="P:intracellular signal transduction"/>
    <property type="evidence" value="ECO:0007669"/>
    <property type="project" value="Ensembl"/>
</dbReference>
<dbReference type="GO" id="GO:0061516">
    <property type="term" value="P:monocyte proliferation"/>
    <property type="evidence" value="ECO:0007669"/>
    <property type="project" value="Ensembl"/>
</dbReference>
<dbReference type="GO" id="GO:0030889">
    <property type="term" value="P:negative regulation of B cell proliferation"/>
    <property type="evidence" value="ECO:0000315"/>
    <property type="project" value="MGI"/>
</dbReference>
<dbReference type="GO" id="GO:0001818">
    <property type="term" value="P:negative regulation of cytokine production"/>
    <property type="evidence" value="ECO:0000315"/>
    <property type="project" value="CACAO"/>
</dbReference>
<dbReference type="GO" id="GO:0032693">
    <property type="term" value="P:negative regulation of interleukin-10 production"/>
    <property type="evidence" value="ECO:0007669"/>
    <property type="project" value="Ensembl"/>
</dbReference>
<dbReference type="GO" id="GO:0001780">
    <property type="term" value="P:neutrophil homeostasis"/>
    <property type="evidence" value="ECO:0007669"/>
    <property type="project" value="Ensembl"/>
</dbReference>
<dbReference type="GO" id="GO:0030890">
    <property type="term" value="P:positive regulation of B cell proliferation"/>
    <property type="evidence" value="ECO:0007669"/>
    <property type="project" value="Ensembl"/>
</dbReference>
<dbReference type="GO" id="GO:0141111">
    <property type="term" value="P:positive regulation of cGAS/STING signaling pathway"/>
    <property type="evidence" value="ECO:0007669"/>
    <property type="project" value="Ensembl"/>
</dbReference>
<dbReference type="GO" id="GO:0002639">
    <property type="term" value="P:positive regulation of immunoglobulin production"/>
    <property type="evidence" value="ECO:0007669"/>
    <property type="project" value="Ensembl"/>
</dbReference>
<dbReference type="GO" id="GO:0150153">
    <property type="term" value="P:positive regulation of interleukin-17A production"/>
    <property type="evidence" value="ECO:0007669"/>
    <property type="project" value="Ensembl"/>
</dbReference>
<dbReference type="GO" id="GO:0032755">
    <property type="term" value="P:positive regulation of interleukin-6 production"/>
    <property type="evidence" value="ECO:0007669"/>
    <property type="project" value="Ensembl"/>
</dbReference>
<dbReference type="GO" id="GO:1900227">
    <property type="term" value="P:positive regulation of NLRP3 inflammasome complex assembly"/>
    <property type="evidence" value="ECO:0000314"/>
    <property type="project" value="UniProtKB"/>
</dbReference>
<dbReference type="GO" id="GO:0050766">
    <property type="term" value="P:positive regulation of phagocytosis"/>
    <property type="evidence" value="ECO:0007669"/>
    <property type="project" value="Ensembl"/>
</dbReference>
<dbReference type="GO" id="GO:1901647">
    <property type="term" value="P:positive regulation of synoviocyte proliferation"/>
    <property type="evidence" value="ECO:0007669"/>
    <property type="project" value="Ensembl"/>
</dbReference>
<dbReference type="GO" id="GO:0032760">
    <property type="term" value="P:positive regulation of tumor necrosis factor production"/>
    <property type="evidence" value="ECO:0007669"/>
    <property type="project" value="Ensembl"/>
</dbReference>
<dbReference type="GO" id="GO:0001812">
    <property type="term" value="P:positive regulation of type I hypersensitivity"/>
    <property type="evidence" value="ECO:0007669"/>
    <property type="project" value="Ensembl"/>
</dbReference>
<dbReference type="GO" id="GO:0001805">
    <property type="term" value="P:positive regulation of type III hypersensitivity"/>
    <property type="evidence" value="ECO:0007669"/>
    <property type="project" value="Ensembl"/>
</dbReference>
<dbReference type="GO" id="GO:0030167">
    <property type="term" value="P:proteoglycan catabolic process"/>
    <property type="evidence" value="ECO:0007669"/>
    <property type="project" value="Ensembl"/>
</dbReference>
<dbReference type="GO" id="GO:0032496">
    <property type="term" value="P:response to lipopolysaccharide"/>
    <property type="evidence" value="ECO:0007669"/>
    <property type="project" value="Ensembl"/>
</dbReference>
<dbReference type="CDD" id="cd01238">
    <property type="entry name" value="PH_Btk"/>
    <property type="match status" value="1"/>
</dbReference>
<dbReference type="CDD" id="cd05113">
    <property type="entry name" value="PTKc_Btk_Bmx"/>
    <property type="match status" value="1"/>
</dbReference>
<dbReference type="CDD" id="cd10397">
    <property type="entry name" value="SH2_Tec_Btk"/>
    <property type="match status" value="1"/>
</dbReference>
<dbReference type="CDD" id="cd11906">
    <property type="entry name" value="SH3_BTK"/>
    <property type="match status" value="1"/>
</dbReference>
<dbReference type="FunFam" id="1.10.510.10:FF:000052">
    <property type="entry name" value="Tyrosine-protein kinase"/>
    <property type="match status" value="1"/>
</dbReference>
<dbReference type="FunFam" id="2.30.29.30:FF:000191">
    <property type="entry name" value="Tyrosine-protein kinase"/>
    <property type="match status" value="1"/>
</dbReference>
<dbReference type="FunFam" id="2.30.30.40:FF:000125">
    <property type="entry name" value="Tyrosine-protein kinase"/>
    <property type="match status" value="1"/>
</dbReference>
<dbReference type="FunFam" id="3.30.200.20:FF:000053">
    <property type="entry name" value="Tyrosine-protein kinase"/>
    <property type="match status" value="1"/>
</dbReference>
<dbReference type="FunFam" id="3.30.505.10:FF:000040">
    <property type="entry name" value="Tyrosine-protein kinase"/>
    <property type="match status" value="1"/>
</dbReference>
<dbReference type="Gene3D" id="2.30.29.30">
    <property type="entry name" value="Pleckstrin-homology domain (PH domain)/Phosphotyrosine-binding domain (PTB)"/>
    <property type="match status" value="1"/>
</dbReference>
<dbReference type="Gene3D" id="3.30.505.10">
    <property type="entry name" value="SH2 domain"/>
    <property type="match status" value="1"/>
</dbReference>
<dbReference type="Gene3D" id="2.30.30.40">
    <property type="entry name" value="SH3 Domains"/>
    <property type="match status" value="1"/>
</dbReference>
<dbReference type="Gene3D" id="1.10.510.10">
    <property type="entry name" value="Transferase(Phosphotransferase) domain 1"/>
    <property type="match status" value="1"/>
</dbReference>
<dbReference type="InterPro" id="IPR035574">
    <property type="entry name" value="BTK_SH3"/>
</dbReference>
<dbReference type="InterPro" id="IPR011009">
    <property type="entry name" value="Kinase-like_dom_sf"/>
</dbReference>
<dbReference type="InterPro" id="IPR050198">
    <property type="entry name" value="Non-receptor_tyrosine_kinases"/>
</dbReference>
<dbReference type="InterPro" id="IPR011993">
    <property type="entry name" value="PH-like_dom_sf"/>
</dbReference>
<dbReference type="InterPro" id="IPR001849">
    <property type="entry name" value="PH_domain"/>
</dbReference>
<dbReference type="InterPro" id="IPR000719">
    <property type="entry name" value="Prot_kinase_dom"/>
</dbReference>
<dbReference type="InterPro" id="IPR017441">
    <property type="entry name" value="Protein_kinase_ATP_BS"/>
</dbReference>
<dbReference type="InterPro" id="IPR001245">
    <property type="entry name" value="Ser-Thr/Tyr_kinase_cat_dom"/>
</dbReference>
<dbReference type="InterPro" id="IPR000980">
    <property type="entry name" value="SH2"/>
</dbReference>
<dbReference type="InterPro" id="IPR036860">
    <property type="entry name" value="SH2_dom_sf"/>
</dbReference>
<dbReference type="InterPro" id="IPR036028">
    <property type="entry name" value="SH3-like_dom_sf"/>
</dbReference>
<dbReference type="InterPro" id="IPR001452">
    <property type="entry name" value="SH3_domain"/>
</dbReference>
<dbReference type="InterPro" id="IPR008266">
    <property type="entry name" value="Tyr_kinase_AS"/>
</dbReference>
<dbReference type="InterPro" id="IPR020635">
    <property type="entry name" value="Tyr_kinase_cat_dom"/>
</dbReference>
<dbReference type="InterPro" id="IPR001562">
    <property type="entry name" value="Znf_Btk_motif"/>
</dbReference>
<dbReference type="PANTHER" id="PTHR24418">
    <property type="entry name" value="TYROSINE-PROTEIN KINASE"/>
    <property type="match status" value="1"/>
</dbReference>
<dbReference type="Pfam" id="PF00779">
    <property type="entry name" value="BTK"/>
    <property type="match status" value="1"/>
</dbReference>
<dbReference type="Pfam" id="PF00169">
    <property type="entry name" value="PH"/>
    <property type="match status" value="1"/>
</dbReference>
<dbReference type="Pfam" id="PF07714">
    <property type="entry name" value="PK_Tyr_Ser-Thr"/>
    <property type="match status" value="1"/>
</dbReference>
<dbReference type="Pfam" id="PF00017">
    <property type="entry name" value="SH2"/>
    <property type="match status" value="1"/>
</dbReference>
<dbReference type="Pfam" id="PF00018">
    <property type="entry name" value="SH3_1"/>
    <property type="match status" value="1"/>
</dbReference>
<dbReference type="PRINTS" id="PR00401">
    <property type="entry name" value="SH2DOMAIN"/>
</dbReference>
<dbReference type="PRINTS" id="PR00452">
    <property type="entry name" value="SH3DOMAIN"/>
</dbReference>
<dbReference type="PRINTS" id="PR00402">
    <property type="entry name" value="TECBTKDOMAIN"/>
</dbReference>
<dbReference type="PRINTS" id="PR00109">
    <property type="entry name" value="TYRKINASE"/>
</dbReference>
<dbReference type="SMART" id="SM00107">
    <property type="entry name" value="BTK"/>
    <property type="match status" value="1"/>
</dbReference>
<dbReference type="SMART" id="SM00233">
    <property type="entry name" value="PH"/>
    <property type="match status" value="1"/>
</dbReference>
<dbReference type="SMART" id="SM00252">
    <property type="entry name" value="SH2"/>
    <property type="match status" value="1"/>
</dbReference>
<dbReference type="SMART" id="SM00326">
    <property type="entry name" value="SH3"/>
    <property type="match status" value="1"/>
</dbReference>
<dbReference type="SMART" id="SM00219">
    <property type="entry name" value="TyrKc"/>
    <property type="match status" value="1"/>
</dbReference>
<dbReference type="SUPFAM" id="SSF50729">
    <property type="entry name" value="PH domain-like"/>
    <property type="match status" value="1"/>
</dbReference>
<dbReference type="SUPFAM" id="SSF56112">
    <property type="entry name" value="Protein kinase-like (PK-like)"/>
    <property type="match status" value="1"/>
</dbReference>
<dbReference type="SUPFAM" id="SSF55550">
    <property type="entry name" value="SH2 domain"/>
    <property type="match status" value="1"/>
</dbReference>
<dbReference type="SUPFAM" id="SSF50044">
    <property type="entry name" value="SH3-domain"/>
    <property type="match status" value="1"/>
</dbReference>
<dbReference type="PROSITE" id="PS50003">
    <property type="entry name" value="PH_DOMAIN"/>
    <property type="match status" value="1"/>
</dbReference>
<dbReference type="PROSITE" id="PS00107">
    <property type="entry name" value="PROTEIN_KINASE_ATP"/>
    <property type="match status" value="1"/>
</dbReference>
<dbReference type="PROSITE" id="PS50011">
    <property type="entry name" value="PROTEIN_KINASE_DOM"/>
    <property type="match status" value="1"/>
</dbReference>
<dbReference type="PROSITE" id="PS00109">
    <property type="entry name" value="PROTEIN_KINASE_TYR"/>
    <property type="match status" value="1"/>
</dbReference>
<dbReference type="PROSITE" id="PS50001">
    <property type="entry name" value="SH2"/>
    <property type="match status" value="1"/>
</dbReference>
<dbReference type="PROSITE" id="PS50002">
    <property type="entry name" value="SH3"/>
    <property type="match status" value="1"/>
</dbReference>
<dbReference type="PROSITE" id="PS51113">
    <property type="entry name" value="ZF_BTK"/>
    <property type="match status" value="1"/>
</dbReference>
<evidence type="ECO:0000250" key="1">
    <source>
        <dbReference type="UniProtKB" id="Q06187"/>
    </source>
</evidence>
<evidence type="ECO:0000255" key="2">
    <source>
        <dbReference type="PROSITE-ProRule" id="PRU00145"/>
    </source>
</evidence>
<evidence type="ECO:0000255" key="3">
    <source>
        <dbReference type="PROSITE-ProRule" id="PRU00159"/>
    </source>
</evidence>
<evidence type="ECO:0000255" key="4">
    <source>
        <dbReference type="PROSITE-ProRule" id="PRU00191"/>
    </source>
</evidence>
<evidence type="ECO:0000255" key="5">
    <source>
        <dbReference type="PROSITE-ProRule" id="PRU00192"/>
    </source>
</evidence>
<evidence type="ECO:0000255" key="6">
    <source>
        <dbReference type="PROSITE-ProRule" id="PRU00432"/>
    </source>
</evidence>
<evidence type="ECO:0000255" key="7">
    <source>
        <dbReference type="PROSITE-ProRule" id="PRU10028"/>
    </source>
</evidence>
<evidence type="ECO:0000256" key="8">
    <source>
        <dbReference type="SAM" id="MobiDB-lite"/>
    </source>
</evidence>
<evidence type="ECO:0000269" key="9">
    <source>
    </source>
</evidence>
<evidence type="ECO:0000269" key="10">
    <source>
    </source>
</evidence>
<evidence type="ECO:0000269" key="11">
    <source>
    </source>
</evidence>
<evidence type="ECO:0000269" key="12">
    <source>
    </source>
</evidence>
<evidence type="ECO:0000269" key="13">
    <source>
    </source>
</evidence>
<evidence type="ECO:0000269" key="14">
    <source>
    </source>
</evidence>
<evidence type="ECO:0000269" key="15">
    <source>
    </source>
</evidence>
<evidence type="ECO:0000269" key="16">
    <source>
    </source>
</evidence>
<evidence type="ECO:0000269" key="17">
    <source>
    </source>
</evidence>
<evidence type="ECO:0000269" key="18">
    <source>
    </source>
</evidence>
<evidence type="ECO:0000269" key="19">
    <source>
    </source>
</evidence>
<evidence type="ECO:0000269" key="20">
    <source>
    </source>
</evidence>
<evidence type="ECO:0000305" key="21"/>
<evidence type="ECO:0007744" key="22">
    <source>
    </source>
</evidence>
<evidence type="ECO:0007829" key="23">
    <source>
        <dbReference type="PDB" id="4XI2"/>
    </source>
</evidence>
<evidence type="ECO:0007829" key="24">
    <source>
        <dbReference type="PDB" id="8FD9"/>
    </source>
</evidence>
<evidence type="ECO:0007829" key="25">
    <source>
        <dbReference type="PDB" id="8FF0"/>
    </source>
</evidence>
<evidence type="ECO:0007829" key="26">
    <source>
        <dbReference type="PDB" id="8GMB"/>
    </source>
</evidence>
<evidence type="ECO:0007829" key="27">
    <source>
        <dbReference type="PDB" id="8S93"/>
    </source>
</evidence>
<reference key="1">
    <citation type="journal article" date="1993" name="Cell">
        <title>Deficient expression of a B cell cytoplasmic tyrosine kinase in human X-linked agammaglobulinemia.</title>
        <authorList>
            <person name="Tsukada S."/>
            <person name="Saffran D.C."/>
            <person name="Rawlings D.J."/>
            <person name="Parolini O."/>
            <person name="Allen R.C."/>
            <person name="Klisak I."/>
            <person name="Sparkes R.S."/>
            <person name="Kubagawa H."/>
            <person name="Mohandas T."/>
            <person name="Quan S."/>
            <person name="Belmont J.W."/>
            <person name="Cooper M.D."/>
            <person name="Conley M.E."/>
            <person name="Witte O.N."/>
        </authorList>
    </citation>
    <scope>NUCLEOTIDE SEQUENCE [MRNA]</scope>
</reference>
<reference key="2">
    <citation type="journal article" date="1993" name="Biochem. Biophys. Res. Commun.">
        <title>Structure and expression of novel protein-tyrosine kinases, Emb and Emt, in hematopoietic cells.</title>
        <authorList>
            <person name="Yamada N."/>
            <person name="Kawakami Y."/>
            <person name="Kimura H."/>
            <person name="Fukamachi H."/>
            <person name="Baier G."/>
            <person name="Altman A."/>
            <person name="Kato T."/>
            <person name="Inagaki Y."/>
            <person name="Kawakami T."/>
        </authorList>
    </citation>
    <scope>NUCLEOTIDE SEQUENCE [MRNA]</scope>
</reference>
<reference key="3">
    <citation type="journal article" date="1994" name="J. Immunol.">
        <title>Genomic organization of mouse and human Bruton's agammaglobulinemia tyrosine kinase (Btk) loci.</title>
        <authorList>
            <person name="Sideras P."/>
            <person name="Mueller S."/>
            <person name="Shiels H."/>
            <person name="Jin H."/>
            <person name="Khan W.N."/>
            <person name="Nilsson L."/>
            <person name="Parkinson E."/>
            <person name="Thomas J.D."/>
            <person name="Branden L."/>
            <person name="Larsson I."/>
            <person name="Paul W.E."/>
            <person name="Rosen F.S."/>
            <person name="Alt F.W."/>
            <person name="Vetrie D."/>
            <person name="Smith C.I.E."/>
            <person name="Xanthopoulos K.G."/>
        </authorList>
    </citation>
    <scope>NUCLEOTIDE SEQUENCE</scope>
</reference>
<reference key="4">
    <citation type="journal article" date="1995" name="Mamm. Genome">
        <title>Sixty-nine kilobases of contiguous human genomic sequence containing the alpha-galactosidase A and Bruton's tyrosine kinase loci.</title>
        <authorList>
            <person name="Oeltjen J.C."/>
            <person name="Liu X."/>
            <person name="Lu J."/>
            <person name="Allen R.C."/>
            <person name="Muzny D.M."/>
            <person name="Belmont J.W."/>
            <person name="Gibbs R.A."/>
        </authorList>
    </citation>
    <scope>NUCLEOTIDE SEQUENCE [GENOMIC DNA]</scope>
    <source>
        <strain>C129</strain>
    </source>
</reference>
<reference key="5">
    <citation type="journal article" date="1996" name="Immunity">
        <title>Regulation of Btk function by a major autophosphorylation site within the SH3 domain.</title>
        <authorList>
            <person name="Park H."/>
            <person name="Wahl M.I."/>
            <person name="Afar D.E."/>
            <person name="Turck C.W."/>
            <person name="Rawlings D.J."/>
            <person name="Tam C."/>
            <person name="Scharenberg A.M."/>
            <person name="Kinet J.P."/>
            <person name="Witte O.N."/>
        </authorList>
    </citation>
    <scope>PROTEIN SEQUENCE OF 219-233</scope>
    <scope>PHOSPHORYLATION AT TYR-223</scope>
    <scope>MUTAGENESIS OF TYR-223 AND LYS-430</scope>
</reference>
<reference key="6">
    <citation type="journal article" date="1995" name="Immunity">
        <title>Activation of Bruton's tyrosine kinase (BTK) by a point mutation in its pleckstrin homology (PH) domain.</title>
        <authorList>
            <person name="Li T."/>
            <person name="Tsukada S."/>
            <person name="Satterthwaite A."/>
            <person name="Havlik M.H."/>
            <person name="Park H."/>
            <person name="Takatsu K."/>
            <person name="Witte O.N."/>
        </authorList>
    </citation>
    <scope>FUNCTION</scope>
    <scope>MUTAGENESIS OF GLU-41 AND LYS-430</scope>
</reference>
<reference key="7">
    <citation type="journal article" date="1996" name="Science">
        <title>Activation of BTK by a phosphorylation mechanism initiated by SRC family kinases.</title>
        <authorList>
            <person name="Rawlings D.J."/>
            <person name="Scharenberg A.M."/>
            <person name="Park H."/>
            <person name="Wahl M.I."/>
            <person name="Lin S."/>
            <person name="Kato R.M."/>
            <person name="Fluckiger A.C."/>
            <person name="Witte O.N."/>
            <person name="Kinet J.P."/>
        </authorList>
    </citation>
    <scope>FUNCTION</scope>
    <scope>PHOSPHORYLATION AT TYR-551</scope>
</reference>
<reference key="8">
    <citation type="journal article" date="1997" name="Biochem. Biophys. Res. Commun.">
        <title>Characterization of the pleckstrin homology domain of Btk as an inositol polyphosphate and phosphoinositide binding domain.</title>
        <authorList>
            <person name="Kojima T."/>
            <person name="Fukuda M."/>
            <person name="Watanabe Y."/>
            <person name="Hamazato F."/>
            <person name="Mikoshiba K."/>
        </authorList>
    </citation>
    <scope>DOMAIN</scope>
</reference>
<reference key="9">
    <citation type="journal article" date="2000" name="J. Exp. Med.">
        <title>Bruton's tyrosine kinase is required for activation of IkappaB kinase and nuclear factor kappaB in response to B cell receptor engagement.</title>
        <authorList>
            <person name="Petro J.B."/>
            <person name="Rahman S.M."/>
            <person name="Ballard D.W."/>
            <person name="Khan W.N."/>
        </authorList>
    </citation>
    <scope>DISRUPTION PHENOTYPE</scope>
</reference>
<reference key="10">
    <citation type="journal article" date="2000" name="J. Immunol.">
        <title>The transcription factor Bright associates with Bruton's tyrosine kinase, the defective protein in immunodeficiency disease.</title>
        <authorList>
            <person name="Webb C.F."/>
            <person name="Yamashita Y."/>
            <person name="Ayers N."/>
            <person name="Evetts S."/>
            <person name="Paulin Y."/>
            <person name="Conley M.E."/>
            <person name="Smith E.A."/>
        </authorList>
    </citation>
    <scope>FUNCTION</scope>
    <scope>INTERACTION WITH ARID3A</scope>
    <scope>SUBCELLULAR LOCATION</scope>
    <scope>CHARACTERIZATION OF VARIANT XID CYS-28</scope>
</reference>
<reference key="11">
    <citation type="journal article" date="2000" name="Proc. Natl. Acad. Sci. U.S.A.">
        <title>Regulation of protein kinase CbetaI by two protein-tyrosine kinases, Btk and Syk.</title>
        <authorList>
            <person name="Kawakami Y."/>
            <person name="Kitaura J."/>
            <person name="Hartman S.E."/>
            <person name="Lowell C.A."/>
            <person name="Siraganian R.P."/>
            <person name="Kawakami T."/>
        </authorList>
    </citation>
    <scope>FUNCTION</scope>
    <scope>ACTIVITY REGULATION</scope>
</reference>
<reference key="12">
    <citation type="journal article" date="2006" name="Mol. Cell. Biol.">
        <title>Induction of immunoglobulin heavy-chain transcription through the transcription factor Bright requires TFII-I.</title>
        <authorList>
            <person name="Rajaiya J."/>
            <person name="Nixon J.C."/>
            <person name="Ayers N."/>
            <person name="Desgranges Z.P."/>
            <person name="Roy A.L."/>
            <person name="Webb C.F."/>
        </authorList>
    </citation>
    <scope>INTERACTION WITH GTF2I AND ARID3A</scope>
    <scope>FUNCTION</scope>
</reference>
<reference key="13">
    <citation type="journal article" date="2007" name="J. Immunol.">
        <title>Quantitative time-resolved phosphoproteomic analysis of mast cell signaling.</title>
        <authorList>
            <person name="Cao L."/>
            <person name="Yu K."/>
            <person name="Banh C."/>
            <person name="Nguyen V."/>
            <person name="Ritz A."/>
            <person name="Raphael B.J."/>
            <person name="Kawakami Y."/>
            <person name="Kawakami T."/>
            <person name="Salomon A.R."/>
        </authorList>
    </citation>
    <scope>PHOSPHORYLATION [LARGE SCALE ANALYSIS] AT TYR-40; TYR-344 AND TYR-551</scope>
    <scope>IDENTIFICATION BY MASS SPECTROMETRY [LARGE SCALE ANALYSIS]</scope>
    <source>
        <tissue>Mast cell</tissue>
    </source>
</reference>
<reference key="14">
    <citation type="journal article" date="2008" name="Immunology">
        <title>Defective Toll-like receptor 9-mediated cytokine production in B cells from Bruton's tyrosine kinase-deficient mice.</title>
        <authorList>
            <person name="Hasan M."/>
            <person name="Lopez-Herrera G."/>
            <person name="Blomberg K.E."/>
            <person name="Lindvall J.M."/>
            <person name="Berglof A."/>
            <person name="Smith C.I."/>
            <person name="Vargas L."/>
        </authorList>
    </citation>
    <scope>FUNCTION IN THE TLR PATHWAY</scope>
</reference>
<reference key="15">
    <citation type="journal article" date="1998" name="Biochem. Pharmacol.">
        <title>Bruton's tyrosine kinase (BTK) as a dual-function regulator of apoptosis.</title>
        <authorList>
            <person name="Uckun F.M."/>
        </authorList>
    </citation>
    <scope>REVIEW ON FUNCTION IN REGULATION OF APOPTOSIS</scope>
</reference>
<reference key="16">
    <citation type="journal article" date="2009" name="Immunol. Rev.">
        <title>Bruton's tyrosine kinase (Btk): function, regulation, and transformation with special emphasis on the PH domain.</title>
        <authorList>
            <person name="Mohamed A.J."/>
            <person name="Yu L."/>
            <person name="Backesjo C.M."/>
            <person name="Vargas L."/>
            <person name="Faryal R."/>
            <person name="Aints A."/>
            <person name="Christensson B."/>
            <person name="Berglof A."/>
            <person name="Vihinen M."/>
            <person name="Nore B.F."/>
            <person name="Smith C.I."/>
        </authorList>
    </citation>
    <scope>REVIEW ON FUNCTION</scope>
    <scope>REVIEW ON ACTIVITY REGULATION</scope>
</reference>
<reference key="17">
    <citation type="journal article" date="2010" name="Cell">
        <title>A tissue-specific atlas of mouse protein phosphorylation and expression.</title>
        <authorList>
            <person name="Huttlin E.L."/>
            <person name="Jedrychowski M.P."/>
            <person name="Elias J.E."/>
            <person name="Goswami T."/>
            <person name="Rad R."/>
            <person name="Beausoleil S.A."/>
            <person name="Villen J."/>
            <person name="Haas W."/>
            <person name="Sowa M.E."/>
            <person name="Gygi S.P."/>
        </authorList>
    </citation>
    <scope>IDENTIFICATION BY MASS SPECTROMETRY [LARGE SCALE ANALYSIS]</scope>
    <source>
        <tissue>Spleen</tissue>
    </source>
</reference>
<reference key="18">
    <citation type="journal article" date="2013" name="Cell Res.">
        <title>Early estrogen-induced gene 1, a novel RANK signaling component, is essential for osteoclastogenesis.</title>
        <authorList>
            <person name="Choi H.K."/>
            <person name="Kang H.R."/>
            <person name="Jung E."/>
            <person name="Kim T.E."/>
            <person name="Lin J.J."/>
            <person name="Lee S.Y."/>
        </authorList>
    </citation>
    <scope>IDENTIFICATION IN A COMPLEX WITH EEIG1; TNFRSF11A; PLCG2; GAB2 AND TEC</scope>
    <scope>SUBCELLULAR LOCATION</scope>
</reference>
<reference key="19">
    <citation type="journal article" date="2021" name="J. Exp. Med.">
        <title>BTK operates a phospho-tyrosine switch to regulate NLRP3 inflammasome activity.</title>
        <authorList>
            <person name="Bittner Z.A."/>
            <person name="Liu X."/>
            <person name="Mateo Tortola M."/>
            <person name="Tapia-Abellan A."/>
            <person name="Shankar S."/>
            <person name="Andreeva L."/>
            <person name="Mangan M."/>
            <person name="Spalinger M."/>
            <person name="Kalbacher H."/>
            <person name="Duewell P."/>
            <person name="Lovotti M."/>
            <person name="Bosch K."/>
            <person name="Dickhoefer S."/>
            <person name="Marcu A."/>
            <person name="Stevanovic S."/>
            <person name="Herster F."/>
            <person name="Cardona Gloria Y."/>
            <person name="Chang T.H."/>
            <person name="Bork F."/>
            <person name="Greve C.L."/>
            <person name="Loeffler M.W."/>
            <person name="Wolz O.O."/>
            <person name="Schilling N.A."/>
            <person name="Kuemmerle-Deschner J.B."/>
            <person name="Wagner S."/>
            <person name="Delor A."/>
            <person name="Grimbacher B."/>
            <person name="Hantschel O."/>
            <person name="Scharl M."/>
            <person name="Wu H."/>
            <person name="Latz E."/>
            <person name="Weber A.N.R."/>
        </authorList>
    </citation>
    <scope>FUNCTION</scope>
</reference>
<reference key="20">
    <citation type="journal article" date="1993" name="Science">
        <title>Mutation of unique region of Bruton's tyrosine kinase in immunodeficient XID mice.</title>
        <authorList>
            <person name="Rawlings D.J."/>
            <person name="Saffran D.C."/>
            <person name="Tsukada S."/>
            <person name="Largaespada D.A."/>
            <person name="Grimaldi J.C."/>
            <person name="Cohen L."/>
            <person name="Mohr R.N."/>
            <person name="Bazan J.F."/>
            <person name="Howard M."/>
            <person name="Copeland N.G."/>
            <person name="Jenkins N.A."/>
            <person name="Witte O.N."/>
        </authorList>
    </citation>
    <scope>VARIANT XID CYS-28</scope>
</reference>
<name>BTK_MOUSE</name>
<comment type="function">
    <text evidence="1 10 11 12 13 15 16 18">Non-receptor tyrosine kinase indispensable for B lymphocyte development, differentiation and signaling (PubMed:10852954, PubMed:7538439, PubMed:8629002). Binding of antigen to the B-cell antigen receptor (BCR) triggers signaling that ultimately leads to B-cell activation (By similarity). After BCR engagement and activation at the plasma membrane, phosphorylates PLCG2 at several sites, igniting the downstream signaling pathway through calcium mobilization, followed by activation of the protein kinase C (PKC) family members (By similarity). PLCG2 phosphorylation is performed in close cooperation with the adapter protein B-cell linker protein BLNK (By similarity). BTK acts as a platform to bring together a diverse array of signaling proteins and is implicated in cytokine receptor signaling pathways (By similarity). Plays an important role in the function of immune cells of innate as well as adaptive immunity, as a component of the Toll-like receptors (TLR) pathway (PubMed:17725607). The TLR pathway acts as a primary surveillance system for the detection of pathogens and are crucial to the activation of host defense (By similarity). Especially, is a critical molecule in regulating TLR9 activation in splenic B-cells (By similarity). Within the TLR pathway, induces tyrosine phosphorylation of TIRAP which leads to TIRAP degradation (By similarity). BTK also plays a critical role in transcription regulation (By similarity). Induces the activity of NF-kappa-B, which is involved in regulating the expression of hundreds of genes (By similarity). BTK is involved on the signaling pathway linking TLR8 and TLR9 to NF-kappa-B (By similarity). Acts as an activator of NLRP3 inflammasome assembly by mediating phosphorylation of NLRP3 (PubMed:34554188). Transiently phosphorylates transcription factor GTF2I on tyrosine residues in response to BCR (PubMed:11120822, PubMed:16738337). GTF2I then translocates to the nucleus to bind regulatory enhancer elements to modulate gene expression (PubMed:11120822, PubMed:16738337). ARID3A and NFAT are other transcriptional target of BTK (PubMed:11120822, PubMed:16738337). BTK is required for the formation of functional ARID3A DNA-binding complexes (PubMed:11120822, PubMed:16738337). There is however no evidence that BTK itself binds directly to DNA (PubMed:11120822, PubMed:16738337). BTK has a dual role in the regulation of apoptosis (By similarity). Plays a role in STING1-mediated induction of type I interferon (IFN) response by phosphorylating DDX41 (By similarity).</text>
</comment>
<comment type="catalytic activity">
    <reaction evidence="7">
        <text>L-tyrosyl-[protein] + ATP = O-phospho-L-tyrosyl-[protein] + ADP + H(+)</text>
        <dbReference type="Rhea" id="RHEA:10596"/>
        <dbReference type="Rhea" id="RHEA-COMP:10136"/>
        <dbReference type="Rhea" id="RHEA-COMP:20101"/>
        <dbReference type="ChEBI" id="CHEBI:15378"/>
        <dbReference type="ChEBI" id="CHEBI:30616"/>
        <dbReference type="ChEBI" id="CHEBI:46858"/>
        <dbReference type="ChEBI" id="CHEBI:61978"/>
        <dbReference type="ChEBI" id="CHEBI:456216"/>
        <dbReference type="EC" id="2.7.10.2"/>
    </reaction>
</comment>
<comment type="cofactor">
    <cofactor evidence="1">
        <name>Zn(2+)</name>
        <dbReference type="ChEBI" id="CHEBI:29105"/>
    </cofactor>
    <text evidence="1">Binds 1 zinc ion per subunit.</text>
</comment>
<comment type="activity regulation">
    <text evidence="10">Activated by phosphorylation. In primary B lymphocytes, is almost always non-phosphorylated and is thus catalytically inactive. Stimulation of TLR8 and TLR9 causes BTK activation. As a negative feedback mechanism to fine-tune BCR signaling, activated PRKCB down-modulates BTK function via direct phosphorylation of BTK at Ser-180, resulting in translocation of BTK back to the cytoplasmic fraction. PIN1, SH3BP5, and IBTK were also identified as BTK activity inhibitors. Interaction with CAV1 leads to dramatic down-regulation of the kinase activity of BTK. LFM-13A is a specific inhibitor of BTK. Dasatinib, a cancer drug acting as a tyrosine kinase inhibitor, also blocks BTK activity.</text>
</comment>
<comment type="subunit">
    <text evidence="1 14">Part of a complex composed of EEIG1, TNFRSF11A/RANK, PLCG2, GAB2, TEC and BTK; complex formation increases in the presence of TNFSF11/RANKL (PubMed:23478294). Binds GTF2I through the PH domain. Interacts with SH3BP5 via the SH3 domain. Interacts with IBTK via its PH domain. Interacts with ARID3A, CAV1, FASLG, PIN1, TLR8 and TLR9. Interacts with MPL/TPOR (By similarity).</text>
</comment>
<comment type="interaction">
    <interactant intactId="EBI-625119">
        <id>P35991</id>
    </interactant>
    <interactant intactId="EBI-525742">
        <id>P27512</id>
        <label>Cd40</label>
    </interactant>
    <organismsDiffer>false</organismsDiffer>
    <experiments>3</experiments>
</comment>
<comment type="interaction">
    <interactant intactId="EBI-625119">
        <id>P35991</id>
    </interactant>
    <interactant intactId="EBI-1688">
        <id>Q60631</id>
        <label>Grb2</label>
    </interactant>
    <organismsDiffer>false</organismsDiffer>
    <experiments>4</experiments>
</comment>
<comment type="interaction">
    <interactant intactId="EBI-625119">
        <id>P35991</id>
    </interactant>
    <interactant intactId="EBI-525108">
        <id>P22366</id>
        <label>Myd88</label>
    </interactant>
    <organismsDiffer>false</organismsDiffer>
    <experiments>2</experiments>
</comment>
<comment type="interaction">
    <interactant intactId="EBI-625119">
        <id>P35991</id>
    </interactant>
    <interactant intactId="EBI-3649271">
        <id>Q80UF7</id>
        <label>Ticam1</label>
    </interactant>
    <organismsDiffer>false</organismsDiffer>
    <experiments>2</experiments>
</comment>
<comment type="subcellular location">
    <subcellularLocation>
        <location evidence="11">Cytoplasm</location>
    </subcellularLocation>
    <subcellularLocation>
        <location evidence="11">Cell membrane</location>
        <topology evidence="11">Peripheral membrane protein</topology>
    </subcellularLocation>
    <subcellularLocation>
        <location evidence="11">Nucleus</location>
    </subcellularLocation>
    <subcellularLocation>
        <location evidence="14">Membrane raft</location>
    </subcellularLocation>
    <text evidence="1">In steady state, BTK is predominantly cytosolic. Following B-cell receptor (BCR) engagement by antigen, translocates to the plasma membrane through its PH domain. Plasma membrane localization is a critical step in the activation of BTK. A fraction of BTK also shuttles between the nucleus and the cytoplasm, and nuclear export is mediated by the nuclear export receptor CRM1.</text>
</comment>
<comment type="domain">
    <text evidence="20">The PH domain mediates the binding to inositol polyphosphate and phosphoinositides, leading to its targeting to the plasma membrane. It is extended in the BTK kinase family by a region designated the TH (Tec homology) domain, which consists of about 80 residues preceding the SH3 domain.</text>
</comment>
<comment type="PTM">
    <text evidence="1">Following B-cell receptor (BCR) engagement, translocates to the plasma membrane where it gets phosphorylated at Tyr-551 by LYN and SYK. Phosphorylation at Tyr-551 is followed by autophosphorylation of Tyr-223 which may create a docking site for a SH2 containing protein. Phosphorylation at Ser-180 by PRKCB, leads in translocation of BTK back to the cytoplasmic fraction. Phosphorylation at Ser-21 and Ser-115 creates a binding site for PIN1 at these Ser-Pro motifs, and promotes it's recruitment (By similarity).</text>
</comment>
<comment type="disease">
    <text>Defects in Btk are the cause of murine X-linked immunodeficiency (XID).</text>
</comment>
<comment type="disruption phenotype">
    <text evidence="9">Prevents BCR-induced activation of NF-kappa-B.</text>
</comment>
<comment type="similarity">
    <text evidence="3">Belongs to the protein kinase superfamily. Tyr protein kinase family. TEC subfamily.</text>
</comment>
<gene>
    <name type="primary">Btk</name>
    <name type="synonym">Bpk</name>
</gene>
<keyword id="KW-0002">3D-structure</keyword>
<keyword id="KW-0007">Acetylation</keyword>
<keyword id="KW-1064">Adaptive immunity</keyword>
<keyword id="KW-0053">Apoptosis</keyword>
<keyword id="KW-0067">ATP-binding</keyword>
<keyword id="KW-1003">Cell membrane</keyword>
<keyword id="KW-0963">Cytoplasm</keyword>
<keyword id="KW-0903">Direct protein sequencing</keyword>
<keyword id="KW-0225">Disease variant</keyword>
<keyword id="KW-0391">Immunity</keyword>
<keyword id="KW-0399">Innate immunity</keyword>
<keyword id="KW-0418">Kinase</keyword>
<keyword id="KW-0446">Lipid-binding</keyword>
<keyword id="KW-0472">Membrane</keyword>
<keyword id="KW-0479">Metal-binding</keyword>
<keyword id="KW-0547">Nucleotide-binding</keyword>
<keyword id="KW-0539">Nucleus</keyword>
<keyword id="KW-0597">Phosphoprotein</keyword>
<keyword id="KW-1185">Reference proteome</keyword>
<keyword id="KW-0727">SH2 domain</keyword>
<keyword id="KW-0728">SH3 domain</keyword>
<keyword id="KW-0804">Transcription</keyword>
<keyword id="KW-0805">Transcription regulation</keyword>
<keyword id="KW-0808">Transferase</keyword>
<keyword id="KW-0829">Tyrosine-protein kinase</keyword>
<keyword id="KW-0862">Zinc</keyword>
<keyword id="KW-0863">Zinc-finger</keyword>
<proteinExistence type="evidence at protein level"/>
<feature type="initiator methionine" description="Removed" evidence="1">
    <location>
        <position position="1"/>
    </location>
</feature>
<feature type="chain" id="PRO_0000088066" description="Tyrosine-protein kinase BTK">
    <location>
        <begin position="2"/>
        <end position="659"/>
    </location>
</feature>
<feature type="domain" description="PH" evidence="2">
    <location>
        <begin position="3"/>
        <end position="133"/>
    </location>
</feature>
<feature type="domain" description="SH3" evidence="5">
    <location>
        <begin position="214"/>
        <end position="274"/>
    </location>
</feature>
<feature type="domain" description="SH2" evidence="4">
    <location>
        <begin position="281"/>
        <end position="377"/>
    </location>
</feature>
<feature type="domain" description="Protein kinase" evidence="3">
    <location>
        <begin position="402"/>
        <end position="655"/>
    </location>
</feature>
<feature type="zinc finger region" description="Btk-type" evidence="6">
    <location>
        <begin position="135"/>
        <end position="171"/>
    </location>
</feature>
<feature type="region of interest" description="Inositol-(1,3,4,5)-tetrakisphosphate 1-binding" evidence="1">
    <location>
        <begin position="12"/>
        <end position="24"/>
    </location>
</feature>
<feature type="region of interest" description="Disordered" evidence="8">
    <location>
        <begin position="171"/>
        <end position="210"/>
    </location>
</feature>
<feature type="short sequence motif" description="CAV1-binding" evidence="1">
    <location>
        <begin position="581"/>
        <end position="588"/>
    </location>
</feature>
<feature type="active site" description="Proton acceptor" evidence="3 7">
    <location>
        <position position="521"/>
    </location>
</feature>
<feature type="binding site" evidence="1">
    <location>
        <position position="26"/>
    </location>
    <ligand>
        <name>1D-myo-inositol 1,3,4,5-tetrakisphosphate</name>
        <dbReference type="ChEBI" id="CHEBI:57895"/>
    </ligand>
</feature>
<feature type="binding site" evidence="1">
    <location>
        <position position="28"/>
    </location>
    <ligand>
        <name>1D-myo-inositol 1,3,4,5-tetrakisphosphate</name>
        <dbReference type="ChEBI" id="CHEBI:57895"/>
    </ligand>
</feature>
<feature type="binding site" evidence="1">
    <location>
        <position position="39"/>
    </location>
    <ligand>
        <name>1D-myo-inositol 1,3,4,5-tetrakisphosphate</name>
        <dbReference type="ChEBI" id="CHEBI:57895"/>
    </ligand>
</feature>
<feature type="binding site" evidence="1">
    <location>
        <position position="53"/>
    </location>
    <ligand>
        <name>1D-myo-inositol 1,3,4,5-tetrakisphosphate</name>
        <dbReference type="ChEBI" id="CHEBI:57895"/>
    </ligand>
</feature>
<feature type="binding site" evidence="6">
    <location>
        <position position="143"/>
    </location>
    <ligand>
        <name>Zn(2+)</name>
        <dbReference type="ChEBI" id="CHEBI:29105"/>
    </ligand>
</feature>
<feature type="binding site" evidence="6">
    <location>
        <position position="154"/>
    </location>
    <ligand>
        <name>Zn(2+)</name>
        <dbReference type="ChEBI" id="CHEBI:29105"/>
    </ligand>
</feature>
<feature type="binding site" evidence="6">
    <location>
        <position position="155"/>
    </location>
    <ligand>
        <name>Zn(2+)</name>
        <dbReference type="ChEBI" id="CHEBI:29105"/>
    </ligand>
</feature>
<feature type="binding site" evidence="6">
    <location>
        <position position="165"/>
    </location>
    <ligand>
        <name>Zn(2+)</name>
        <dbReference type="ChEBI" id="CHEBI:29105"/>
    </ligand>
</feature>
<feature type="binding site" evidence="3">
    <location>
        <begin position="408"/>
        <end position="416"/>
    </location>
    <ligand>
        <name>ATP</name>
        <dbReference type="ChEBI" id="CHEBI:30616"/>
    </ligand>
</feature>
<feature type="binding site" evidence="3">
    <location>
        <position position="430"/>
    </location>
    <ligand>
        <name>ATP</name>
        <dbReference type="ChEBI" id="CHEBI:30616"/>
    </ligand>
</feature>
<feature type="modified residue" description="N-acetylalanine" evidence="1">
    <location>
        <position position="2"/>
    </location>
</feature>
<feature type="modified residue" description="Phosphoserine" evidence="1">
    <location>
        <position position="21"/>
    </location>
</feature>
<feature type="modified residue" description="Phosphotyrosine" evidence="22">
    <location>
        <position position="40"/>
    </location>
</feature>
<feature type="modified residue" description="Phosphoserine" evidence="1">
    <location>
        <position position="55"/>
    </location>
</feature>
<feature type="modified residue" description="Phosphoserine" evidence="1">
    <location>
        <position position="115"/>
    </location>
</feature>
<feature type="modified residue" description="Phosphoserine; by PKC/PRKCB" evidence="1">
    <location>
        <position position="180"/>
    </location>
</feature>
<feature type="modified residue" description="Phosphothreonine" evidence="1">
    <location>
        <position position="191"/>
    </location>
</feature>
<feature type="modified residue" description="Phosphotyrosine; by autocatalysis" evidence="19">
    <location>
        <position position="223"/>
    </location>
</feature>
<feature type="modified residue" description="Phosphotyrosine" evidence="22">
    <location>
        <position position="344"/>
    </location>
</feature>
<feature type="modified residue" description="Phosphotyrosine" evidence="1">
    <location>
        <position position="361"/>
    </location>
</feature>
<feature type="modified residue" description="Phosphotyrosine; by LYN and SYK" evidence="18 22">
    <location>
        <position position="551"/>
    </location>
</feature>
<feature type="modified residue" description="Phosphoserine" evidence="1">
    <location>
        <position position="604"/>
    </location>
</feature>
<feature type="modified residue" description="Phosphotyrosine" evidence="1">
    <location>
        <position position="617"/>
    </location>
</feature>
<feature type="modified residue" description="Phosphoserine" evidence="1">
    <location>
        <position position="623"/>
    </location>
</feature>
<feature type="modified residue" description="Phosphoserine" evidence="1">
    <location>
        <position position="659"/>
    </location>
</feature>
<feature type="sequence variant" description="In XID; prevents interaction with ARID3A." evidence="11 17">
    <original>R</original>
    <variation>C</variation>
    <location>
        <position position="28"/>
    </location>
</feature>
<feature type="mutagenesis site" description="Constitutive activation." evidence="16">
    <original>E</original>
    <variation>K</variation>
    <location>
        <position position="41"/>
    </location>
</feature>
<feature type="mutagenesis site" description="No autophosphorylation." evidence="19">
    <original>Y</original>
    <variation>F</variation>
    <location>
        <position position="223"/>
    </location>
</feature>
<feature type="mutagenesis site" description="Loss of activity and no phosphorylation." evidence="16 19">
    <original>K</original>
    <variation>R</variation>
    <location>
        <position position="430"/>
    </location>
</feature>
<feature type="sequence conflict" description="In Ref. 2; L10627." evidence="21" ref="2">
    <original>V</original>
    <variation>A</variation>
    <location>
        <position position="67"/>
    </location>
</feature>
<feature type="sequence conflict" description="In Ref. 1; AAA37316." evidence="21" ref="1">
    <original>R</original>
    <variation>P</variation>
    <location>
        <position position="123"/>
    </location>
</feature>
<feature type="sequence conflict" description="In Ref. 2." evidence="21" ref="2">
    <original>I</original>
    <variation>IWI</variation>
    <location>
        <position position="197"/>
    </location>
</feature>
<feature type="sequence conflict" description="In Ref. 2; L10627." evidence="21" ref="2">
    <location>
        <position position="450"/>
    </location>
</feature>
<feature type="strand" evidence="27">
    <location>
        <begin position="6"/>
        <end position="13"/>
    </location>
</feature>
<feature type="strand" evidence="27">
    <location>
        <begin position="25"/>
        <end position="32"/>
    </location>
</feature>
<feature type="strand" evidence="27">
    <location>
        <begin position="34"/>
        <end position="43"/>
    </location>
</feature>
<feature type="turn" evidence="27">
    <location>
        <begin position="44"/>
        <end position="47"/>
    </location>
</feature>
<feature type="strand" evidence="27">
    <location>
        <begin position="48"/>
        <end position="57"/>
    </location>
</feature>
<feature type="helix" evidence="27">
    <location>
        <begin position="58"/>
        <end position="60"/>
    </location>
</feature>
<feature type="strand" evidence="27">
    <location>
        <begin position="61"/>
        <end position="66"/>
    </location>
</feature>
<feature type="helix" evidence="27">
    <location>
        <begin position="75"/>
        <end position="77"/>
    </location>
</feature>
<feature type="strand" evidence="27">
    <location>
        <begin position="100"/>
        <end position="108"/>
    </location>
</feature>
<feature type="strand" evidence="27">
    <location>
        <begin position="110"/>
        <end position="117"/>
    </location>
</feature>
<feature type="helix" evidence="27">
    <location>
        <begin position="118"/>
        <end position="132"/>
    </location>
</feature>
<feature type="strand" evidence="27">
    <location>
        <begin position="140"/>
        <end position="142"/>
    </location>
</feature>
<feature type="turn" evidence="27">
    <location>
        <begin position="153"/>
        <end position="155"/>
    </location>
</feature>
<feature type="strand" evidence="27">
    <location>
        <begin position="165"/>
        <end position="167"/>
    </location>
</feature>
<feature type="strand" evidence="23">
    <location>
        <begin position="217"/>
        <end position="223"/>
    </location>
</feature>
<feature type="strand" evidence="23">
    <location>
        <begin position="240"/>
        <end position="245"/>
    </location>
</feature>
<feature type="strand" evidence="23">
    <location>
        <begin position="248"/>
        <end position="255"/>
    </location>
</feature>
<feature type="strand" evidence="23">
    <location>
        <begin position="261"/>
        <end position="265"/>
    </location>
</feature>
<feature type="helix" evidence="26">
    <location>
        <begin position="266"/>
        <end position="268"/>
    </location>
</feature>
<feature type="strand" evidence="26">
    <location>
        <begin position="269"/>
        <end position="272"/>
    </location>
</feature>
<feature type="helix" evidence="26">
    <location>
        <begin position="275"/>
        <end position="278"/>
    </location>
</feature>
<feature type="strand" evidence="23">
    <location>
        <begin position="279"/>
        <end position="281"/>
    </location>
</feature>
<feature type="helix" evidence="23">
    <location>
        <begin position="288"/>
        <end position="294"/>
    </location>
</feature>
<feature type="strand" evidence="23">
    <location>
        <begin position="304"/>
        <end position="307"/>
    </location>
</feature>
<feature type="strand" evidence="23">
    <location>
        <begin position="316"/>
        <end position="321"/>
    </location>
</feature>
<feature type="strand" evidence="23">
    <location>
        <begin position="330"/>
        <end position="335"/>
    </location>
</feature>
<feature type="strand" evidence="26">
    <location>
        <begin position="344"/>
        <end position="347"/>
    </location>
</feature>
<feature type="helix" evidence="23">
    <location>
        <begin position="355"/>
        <end position="361"/>
    </location>
</feature>
<feature type="turn" evidence="23">
    <location>
        <begin position="362"/>
        <end position="364"/>
    </location>
</feature>
<feature type="strand" evidence="23">
    <location>
        <begin position="369"/>
        <end position="371"/>
    </location>
</feature>
<feature type="strand" evidence="23">
    <location>
        <begin position="388"/>
        <end position="391"/>
    </location>
</feature>
<feature type="helix" evidence="24">
    <location>
        <begin position="399"/>
        <end position="401"/>
    </location>
</feature>
<feature type="strand" evidence="24">
    <location>
        <begin position="402"/>
        <end position="411"/>
    </location>
</feature>
<feature type="strand" evidence="24">
    <location>
        <begin position="414"/>
        <end position="421"/>
    </location>
</feature>
<feature type="turn" evidence="24">
    <location>
        <begin position="422"/>
        <end position="424"/>
    </location>
</feature>
<feature type="strand" evidence="24">
    <location>
        <begin position="425"/>
        <end position="432"/>
    </location>
</feature>
<feature type="turn" evidence="25">
    <location>
        <begin position="434"/>
        <end position="436"/>
    </location>
</feature>
<feature type="helix" evidence="24">
    <location>
        <begin position="439"/>
        <end position="451"/>
    </location>
</feature>
<feature type="strand" evidence="24">
    <location>
        <begin position="460"/>
        <end position="464"/>
    </location>
</feature>
<feature type="strand" evidence="24">
    <location>
        <begin position="466"/>
        <end position="469"/>
    </location>
</feature>
<feature type="strand" evidence="24">
    <location>
        <begin position="471"/>
        <end position="475"/>
    </location>
</feature>
<feature type="strand" evidence="27">
    <location>
        <begin position="478"/>
        <end position="481"/>
    </location>
</feature>
<feature type="helix" evidence="24">
    <location>
        <begin position="482"/>
        <end position="489"/>
    </location>
</feature>
<feature type="helix" evidence="23">
    <location>
        <begin position="490"/>
        <end position="492"/>
    </location>
</feature>
<feature type="helix" evidence="24">
    <location>
        <begin position="495"/>
        <end position="514"/>
    </location>
</feature>
<feature type="helix" evidence="24">
    <location>
        <begin position="524"/>
        <end position="526"/>
    </location>
</feature>
<feature type="strand" evidence="24">
    <location>
        <begin position="527"/>
        <end position="529"/>
    </location>
</feature>
<feature type="strand" evidence="24">
    <location>
        <begin position="535"/>
        <end position="537"/>
    </location>
</feature>
<feature type="helix" evidence="24">
    <location>
        <begin position="542"/>
        <end position="545"/>
    </location>
</feature>
<feature type="helix" evidence="24">
    <location>
        <begin position="549"/>
        <end position="552"/>
    </location>
</feature>
<feature type="strand" evidence="25">
    <location>
        <begin position="553"/>
        <end position="559"/>
    </location>
</feature>
<feature type="helix" evidence="24">
    <location>
        <begin position="561"/>
        <end position="563"/>
    </location>
</feature>
<feature type="helix" evidence="24">
    <location>
        <begin position="566"/>
        <end position="571"/>
    </location>
</feature>
<feature type="helix" evidence="24">
    <location>
        <begin position="576"/>
        <end position="591"/>
    </location>
</feature>
<feature type="turn" evidence="23">
    <location>
        <begin position="592"/>
        <end position="594"/>
    </location>
</feature>
<feature type="turn" evidence="24">
    <location>
        <begin position="597"/>
        <end position="600"/>
    </location>
</feature>
<feature type="helix" evidence="24">
    <location>
        <begin position="603"/>
        <end position="611"/>
    </location>
</feature>
<feature type="helix" evidence="24">
    <location>
        <begin position="624"/>
        <end position="632"/>
    </location>
</feature>
<feature type="helix" evidence="24">
    <location>
        <begin position="638"/>
        <end position="640"/>
    </location>
</feature>
<feature type="helix" evidence="24">
    <location>
        <begin position="644"/>
        <end position="659"/>
    </location>
</feature>
<protein>
    <recommendedName>
        <fullName>Tyrosine-protein kinase BTK</fullName>
        <ecNumber>2.7.10.2</ecNumber>
    </recommendedName>
    <alternativeName>
        <fullName>Agammaglobulinemia tyrosine kinase</fullName>
        <shortName>ATK</shortName>
    </alternativeName>
    <alternativeName>
        <fullName>B-cell progenitor kinase</fullName>
        <shortName>BPK</shortName>
    </alternativeName>
    <alternativeName>
        <fullName>Bruton tyrosine kinase</fullName>
    </alternativeName>
    <alternativeName>
        <fullName>Kinase EMB</fullName>
    </alternativeName>
</protein>